<keyword id="KW-0489">Methyltransferase</keyword>
<keyword id="KW-1185">Reference proteome</keyword>
<keyword id="KW-0949">S-adenosyl-L-methionine</keyword>
<keyword id="KW-0808">Transferase</keyword>
<keyword id="KW-0819">tRNA processing</keyword>
<dbReference type="EC" id="2.1.1.282"/>
<dbReference type="EMBL" id="BX927315">
    <property type="protein sequence ID" value="CAN88068.1"/>
    <property type="molecule type" value="Genomic_DNA"/>
</dbReference>
<dbReference type="EMBL" id="BC075981">
    <property type="protein sequence ID" value="AAH75981.1"/>
    <property type="molecule type" value="mRNA"/>
</dbReference>
<dbReference type="RefSeq" id="NP_001002611.1">
    <property type="nucleotide sequence ID" value="NM_001002611.1"/>
</dbReference>
<dbReference type="SMR" id="Q6DHJ1"/>
<dbReference type="FunCoup" id="Q6DHJ1">
    <property type="interactions" value="188"/>
</dbReference>
<dbReference type="STRING" id="7955.ENSDARP00000055736"/>
<dbReference type="PaxDb" id="7955-ENSDARP00000055736"/>
<dbReference type="Ensembl" id="ENSDART00000055737">
    <property type="protein sequence ID" value="ENSDARP00000055736"/>
    <property type="gene ID" value="ENSDARG00000038222"/>
</dbReference>
<dbReference type="GeneID" id="436884"/>
<dbReference type="KEGG" id="dre:436884"/>
<dbReference type="AGR" id="ZFIN:ZDB-GENE-040718-355"/>
<dbReference type="CTD" id="127253"/>
<dbReference type="ZFIN" id="ZDB-GENE-040718-355">
    <property type="gene designation" value="tyw3"/>
</dbReference>
<dbReference type="eggNOG" id="KOG1228">
    <property type="taxonomic scope" value="Eukaryota"/>
</dbReference>
<dbReference type="HOGENOM" id="CLU_047426_1_1_1"/>
<dbReference type="InParanoid" id="Q6DHJ1"/>
<dbReference type="OMA" id="TWLYVSH"/>
<dbReference type="OrthoDB" id="263283at2759"/>
<dbReference type="PhylomeDB" id="Q6DHJ1"/>
<dbReference type="TreeFam" id="TF329327"/>
<dbReference type="UniPathway" id="UPA00375"/>
<dbReference type="PRO" id="PR:Q6DHJ1"/>
<dbReference type="Proteomes" id="UP000000437">
    <property type="component" value="Chromosome 2"/>
</dbReference>
<dbReference type="Bgee" id="ENSDARG00000038222">
    <property type="expression patterns" value="Expressed in somite and 27 other cell types or tissues"/>
</dbReference>
<dbReference type="GO" id="GO:0005737">
    <property type="term" value="C:cytoplasm"/>
    <property type="evidence" value="ECO:0000318"/>
    <property type="project" value="GO_Central"/>
</dbReference>
<dbReference type="GO" id="GO:0008175">
    <property type="term" value="F:tRNA methyltransferase activity"/>
    <property type="evidence" value="ECO:0000318"/>
    <property type="project" value="GO_Central"/>
</dbReference>
<dbReference type="GO" id="GO:0030488">
    <property type="term" value="P:tRNA methylation"/>
    <property type="evidence" value="ECO:0000318"/>
    <property type="project" value="GO_Central"/>
</dbReference>
<dbReference type="GO" id="GO:0031591">
    <property type="term" value="P:wybutosine biosynthetic process"/>
    <property type="evidence" value="ECO:0000318"/>
    <property type="project" value="GO_Central"/>
</dbReference>
<dbReference type="FunFam" id="3.30.1960.10:FF:000001">
    <property type="entry name" value="tRNA wybutosine-synthesizing protein 3 homolog"/>
    <property type="match status" value="1"/>
</dbReference>
<dbReference type="Gene3D" id="3.30.1960.10">
    <property type="entry name" value="tRNA wybutosine-synthesizing-like"/>
    <property type="match status" value="1"/>
</dbReference>
<dbReference type="InterPro" id="IPR003827">
    <property type="entry name" value="tRNA_yW-synthesising"/>
</dbReference>
<dbReference type="InterPro" id="IPR036602">
    <property type="entry name" value="tRNA_yW-synthesising-like_sf"/>
</dbReference>
<dbReference type="PANTHER" id="PTHR48418">
    <property type="entry name" value="TRNA WYBUTOSINE-SYNTHESIZING PROTEIN 3"/>
    <property type="match status" value="1"/>
</dbReference>
<dbReference type="PANTHER" id="PTHR48418:SF1">
    <property type="entry name" value="TRNA WYBUTOSINE-SYNTHESIZING PROTEIN 3"/>
    <property type="match status" value="1"/>
</dbReference>
<dbReference type="Pfam" id="PF02676">
    <property type="entry name" value="TYW3"/>
    <property type="match status" value="1"/>
</dbReference>
<dbReference type="SUPFAM" id="SSF111278">
    <property type="entry name" value="SSo0622-like"/>
    <property type="match status" value="1"/>
</dbReference>
<sequence length="251" mass="28798">MDGDSFQQWKNQCLNKCDFSKKGSVDEDISHVVSFINSQDRYFTTSSCSGRIILFDAVSDCPDVQKQNCSWLFVTHQKCQMEDVVRGLEKSVGDATFKFEPFVLHVQCKQLEDAQLLHTVAINSGFRNSGITVGKKGKIIMAVRSTHCLEVPLSHRSHVLVTHQYLDFLVGVANQKMEENLKRIQRFSECLQAALQPQEEKCSFKEADNKTVYRRRRKRTQDVSVTDSSQNTQEHHENTEEEIDCDLLFLL</sequence>
<reference key="1">
    <citation type="journal article" date="2013" name="Nature">
        <title>The zebrafish reference genome sequence and its relationship to the human genome.</title>
        <authorList>
            <person name="Howe K."/>
            <person name="Clark M.D."/>
            <person name="Torroja C.F."/>
            <person name="Torrance J."/>
            <person name="Berthelot C."/>
            <person name="Muffato M."/>
            <person name="Collins J.E."/>
            <person name="Humphray S."/>
            <person name="McLaren K."/>
            <person name="Matthews L."/>
            <person name="McLaren S."/>
            <person name="Sealy I."/>
            <person name="Caccamo M."/>
            <person name="Churcher C."/>
            <person name="Scott C."/>
            <person name="Barrett J.C."/>
            <person name="Koch R."/>
            <person name="Rauch G.J."/>
            <person name="White S."/>
            <person name="Chow W."/>
            <person name="Kilian B."/>
            <person name="Quintais L.T."/>
            <person name="Guerra-Assuncao J.A."/>
            <person name="Zhou Y."/>
            <person name="Gu Y."/>
            <person name="Yen J."/>
            <person name="Vogel J.H."/>
            <person name="Eyre T."/>
            <person name="Redmond S."/>
            <person name="Banerjee R."/>
            <person name="Chi J."/>
            <person name="Fu B."/>
            <person name="Langley E."/>
            <person name="Maguire S.F."/>
            <person name="Laird G.K."/>
            <person name="Lloyd D."/>
            <person name="Kenyon E."/>
            <person name="Donaldson S."/>
            <person name="Sehra H."/>
            <person name="Almeida-King J."/>
            <person name="Loveland J."/>
            <person name="Trevanion S."/>
            <person name="Jones M."/>
            <person name="Quail M."/>
            <person name="Willey D."/>
            <person name="Hunt A."/>
            <person name="Burton J."/>
            <person name="Sims S."/>
            <person name="McLay K."/>
            <person name="Plumb B."/>
            <person name="Davis J."/>
            <person name="Clee C."/>
            <person name="Oliver K."/>
            <person name="Clark R."/>
            <person name="Riddle C."/>
            <person name="Elliot D."/>
            <person name="Threadgold G."/>
            <person name="Harden G."/>
            <person name="Ware D."/>
            <person name="Begum S."/>
            <person name="Mortimore B."/>
            <person name="Kerry G."/>
            <person name="Heath P."/>
            <person name="Phillimore B."/>
            <person name="Tracey A."/>
            <person name="Corby N."/>
            <person name="Dunn M."/>
            <person name="Johnson C."/>
            <person name="Wood J."/>
            <person name="Clark S."/>
            <person name="Pelan S."/>
            <person name="Griffiths G."/>
            <person name="Smith M."/>
            <person name="Glithero R."/>
            <person name="Howden P."/>
            <person name="Barker N."/>
            <person name="Lloyd C."/>
            <person name="Stevens C."/>
            <person name="Harley J."/>
            <person name="Holt K."/>
            <person name="Panagiotidis G."/>
            <person name="Lovell J."/>
            <person name="Beasley H."/>
            <person name="Henderson C."/>
            <person name="Gordon D."/>
            <person name="Auger K."/>
            <person name="Wright D."/>
            <person name="Collins J."/>
            <person name="Raisen C."/>
            <person name="Dyer L."/>
            <person name="Leung K."/>
            <person name="Robertson L."/>
            <person name="Ambridge K."/>
            <person name="Leongamornlert D."/>
            <person name="McGuire S."/>
            <person name="Gilderthorp R."/>
            <person name="Griffiths C."/>
            <person name="Manthravadi D."/>
            <person name="Nichol S."/>
            <person name="Barker G."/>
            <person name="Whitehead S."/>
            <person name="Kay M."/>
            <person name="Brown J."/>
            <person name="Murnane C."/>
            <person name="Gray E."/>
            <person name="Humphries M."/>
            <person name="Sycamore N."/>
            <person name="Barker D."/>
            <person name="Saunders D."/>
            <person name="Wallis J."/>
            <person name="Babbage A."/>
            <person name="Hammond S."/>
            <person name="Mashreghi-Mohammadi M."/>
            <person name="Barr L."/>
            <person name="Martin S."/>
            <person name="Wray P."/>
            <person name="Ellington A."/>
            <person name="Matthews N."/>
            <person name="Ellwood M."/>
            <person name="Woodmansey R."/>
            <person name="Clark G."/>
            <person name="Cooper J."/>
            <person name="Tromans A."/>
            <person name="Grafham D."/>
            <person name="Skuce C."/>
            <person name="Pandian R."/>
            <person name="Andrews R."/>
            <person name="Harrison E."/>
            <person name="Kimberley A."/>
            <person name="Garnett J."/>
            <person name="Fosker N."/>
            <person name="Hall R."/>
            <person name="Garner P."/>
            <person name="Kelly D."/>
            <person name="Bird C."/>
            <person name="Palmer S."/>
            <person name="Gehring I."/>
            <person name="Berger A."/>
            <person name="Dooley C.M."/>
            <person name="Ersan-Urun Z."/>
            <person name="Eser C."/>
            <person name="Geiger H."/>
            <person name="Geisler M."/>
            <person name="Karotki L."/>
            <person name="Kirn A."/>
            <person name="Konantz J."/>
            <person name="Konantz M."/>
            <person name="Oberlander M."/>
            <person name="Rudolph-Geiger S."/>
            <person name="Teucke M."/>
            <person name="Lanz C."/>
            <person name="Raddatz G."/>
            <person name="Osoegawa K."/>
            <person name="Zhu B."/>
            <person name="Rapp A."/>
            <person name="Widaa S."/>
            <person name="Langford C."/>
            <person name="Yang F."/>
            <person name="Schuster S.C."/>
            <person name="Carter N.P."/>
            <person name="Harrow J."/>
            <person name="Ning Z."/>
            <person name="Herrero J."/>
            <person name="Searle S.M."/>
            <person name="Enright A."/>
            <person name="Geisler R."/>
            <person name="Plasterk R.H."/>
            <person name="Lee C."/>
            <person name="Westerfield M."/>
            <person name="de Jong P.J."/>
            <person name="Zon L.I."/>
            <person name="Postlethwait J.H."/>
            <person name="Nusslein-Volhard C."/>
            <person name="Hubbard T.J."/>
            <person name="Roest Crollius H."/>
            <person name="Rogers J."/>
            <person name="Stemple D.L."/>
        </authorList>
    </citation>
    <scope>NUCLEOTIDE SEQUENCE [LARGE SCALE GENOMIC DNA]</scope>
    <source>
        <strain>Tuebingen</strain>
    </source>
</reference>
<reference key="2">
    <citation type="submission" date="2004-07" db="EMBL/GenBank/DDBJ databases">
        <authorList>
            <consortium name="NIH - Zebrafish Gene Collection (ZGC) project"/>
        </authorList>
    </citation>
    <scope>NUCLEOTIDE SEQUENCE [LARGE SCALE MRNA]</scope>
</reference>
<evidence type="ECO:0000250" key="1"/>
<evidence type="ECO:0000256" key="2">
    <source>
        <dbReference type="SAM" id="MobiDB-lite"/>
    </source>
</evidence>
<evidence type="ECO:0000305" key="3"/>
<name>TYW3_DANRE</name>
<organism>
    <name type="scientific">Danio rerio</name>
    <name type="common">Zebrafish</name>
    <name type="synonym">Brachydanio rerio</name>
    <dbReference type="NCBI Taxonomy" id="7955"/>
    <lineage>
        <taxon>Eukaryota</taxon>
        <taxon>Metazoa</taxon>
        <taxon>Chordata</taxon>
        <taxon>Craniata</taxon>
        <taxon>Vertebrata</taxon>
        <taxon>Euteleostomi</taxon>
        <taxon>Actinopterygii</taxon>
        <taxon>Neopterygii</taxon>
        <taxon>Teleostei</taxon>
        <taxon>Ostariophysi</taxon>
        <taxon>Cypriniformes</taxon>
        <taxon>Danionidae</taxon>
        <taxon>Danioninae</taxon>
        <taxon>Danio</taxon>
    </lineage>
</organism>
<accession>Q6DHJ1</accession>
<accession>A5PN41</accession>
<feature type="chain" id="PRO_0000281846" description="tRNA wybutosine-synthesizing protein 3 homolog">
    <location>
        <begin position="1"/>
        <end position="251"/>
    </location>
</feature>
<feature type="region of interest" description="Disordered" evidence="2">
    <location>
        <begin position="213"/>
        <end position="240"/>
    </location>
</feature>
<protein>
    <recommendedName>
        <fullName>tRNA wybutosine-synthesizing protein 3 homolog</fullName>
        <shortName>tRNA-yW-synthesizing protein 3</shortName>
        <ecNumber>2.1.1.282</ecNumber>
    </recommendedName>
    <alternativeName>
        <fullName>tRNA(Phe) 7-((3-amino-3-carboxypropyl)-4-demethylwyosine(37)-N(4))-methyltransferase</fullName>
    </alternativeName>
</protein>
<gene>
    <name type="primary">tyw3</name>
    <name type="ORF">si:ch211-215b16.3</name>
    <name type="ORF">zgc:92277</name>
</gene>
<proteinExistence type="evidence at transcript level"/>
<comment type="function">
    <text evidence="1">Probable S-adenosyl-L-methionine-dependent methyltransferase that acts as a component of the wybutosine biosynthesis pathway. Wybutosine is a hyper modified guanosine with a tricyclic base found at the 3'-position adjacent to the anticodon of eukaryotic phenylalanine tRNA (By similarity).</text>
</comment>
<comment type="catalytic activity">
    <reaction>
        <text>4-demethyl-7-[(3S)-3-amino-3-carboxypropyl]wyosine(37) in tRNA(Phe) + S-adenosyl-L-methionine = 7-[(3S)-3-amino-3-carboxypropyl]wyosine(37) in tRNA(Phe) + S-adenosyl-L-homocysteine + H(+)</text>
        <dbReference type="Rhea" id="RHEA:36635"/>
        <dbReference type="Rhea" id="RHEA-COMP:10378"/>
        <dbReference type="Rhea" id="RHEA-COMP:10379"/>
        <dbReference type="ChEBI" id="CHEBI:15378"/>
        <dbReference type="ChEBI" id="CHEBI:57856"/>
        <dbReference type="ChEBI" id="CHEBI:59789"/>
        <dbReference type="ChEBI" id="CHEBI:73543"/>
        <dbReference type="ChEBI" id="CHEBI:73550"/>
        <dbReference type="EC" id="2.1.1.282"/>
    </reaction>
</comment>
<comment type="pathway">
    <text>tRNA modification; wybutosine-tRNA(Phe) biosynthesis.</text>
</comment>
<comment type="similarity">
    <text evidence="3">Belongs to the TYW3 family.</text>
</comment>